<proteinExistence type="inferred from homology"/>
<evidence type="ECO:0000255" key="1">
    <source>
        <dbReference type="HAMAP-Rule" id="MF_01107"/>
    </source>
</evidence>
<evidence type="ECO:0000305" key="2"/>
<comment type="function">
    <text evidence="1">Involved in both the arginine and lysine biosynthetic pathways.</text>
</comment>
<comment type="catalytic activity">
    <reaction evidence="1">
        <text>N(2)-acetyl-L-ornithine + 2-oxoglutarate = N-acetyl-L-glutamate 5-semialdehyde + L-glutamate</text>
        <dbReference type="Rhea" id="RHEA:18049"/>
        <dbReference type="ChEBI" id="CHEBI:16810"/>
        <dbReference type="ChEBI" id="CHEBI:29123"/>
        <dbReference type="ChEBI" id="CHEBI:29985"/>
        <dbReference type="ChEBI" id="CHEBI:57805"/>
        <dbReference type="EC" id="2.6.1.11"/>
    </reaction>
</comment>
<comment type="catalytic activity">
    <reaction evidence="1">
        <text>N-succinyl-(2S,6S)-2,6-diaminopimelate + 2-oxoglutarate = (S)-2-succinylamino-6-oxoheptanedioate + L-glutamate</text>
        <dbReference type="Rhea" id="RHEA:11960"/>
        <dbReference type="ChEBI" id="CHEBI:15685"/>
        <dbReference type="ChEBI" id="CHEBI:16810"/>
        <dbReference type="ChEBI" id="CHEBI:29985"/>
        <dbReference type="ChEBI" id="CHEBI:58087"/>
        <dbReference type="EC" id="2.6.1.17"/>
    </reaction>
</comment>
<comment type="cofactor">
    <cofactor evidence="1">
        <name>pyridoxal 5'-phosphate</name>
        <dbReference type="ChEBI" id="CHEBI:597326"/>
    </cofactor>
    <text evidence="1">Binds 1 pyridoxal phosphate per subunit.</text>
</comment>
<comment type="pathway">
    <text evidence="1">Amino-acid biosynthesis; L-arginine biosynthesis; N(2)-acetyl-L-ornithine from L-glutamate: step 4/4.</text>
</comment>
<comment type="pathway">
    <text evidence="1">Amino-acid biosynthesis; L-lysine biosynthesis via DAP pathway; LL-2,6-diaminopimelate from (S)-tetrahydrodipicolinate (succinylase route): step 2/3.</text>
</comment>
<comment type="subunit">
    <text evidence="1">Homodimer.</text>
</comment>
<comment type="subcellular location">
    <subcellularLocation>
        <location evidence="1">Cytoplasm</location>
    </subcellularLocation>
</comment>
<comment type="similarity">
    <text evidence="1">Belongs to the class-III pyridoxal-phosphate-dependent aminotransferase family. ArgD subfamily.</text>
</comment>
<comment type="caution">
    <text evidence="2">PubMed:11586360 sequence differs from that shown due to the presence of an IS100 insertion element between positions 182 and 183. This gene in strain CO-92 may, therefore, be a pseudogene.</text>
</comment>
<comment type="sequence caution" evidence="2">
    <conflict type="erroneous initiation">
        <sequence resource="EMBL-CDS" id="AAM87498"/>
    </conflict>
</comment>
<comment type="sequence caution" evidence="2">
    <conflict type="erroneous initiation">
        <sequence resource="EMBL-CDS" id="AAS60449"/>
    </conflict>
</comment>
<feature type="chain" id="PRO_0000112817" description="Acetylornithine/succinyldiaminopimelate aminotransferase">
    <location>
        <begin position="1"/>
        <end position="405"/>
    </location>
</feature>
<feature type="binding site" evidence="1">
    <location>
        <begin position="107"/>
        <end position="108"/>
    </location>
    <ligand>
        <name>pyridoxal 5'-phosphate</name>
        <dbReference type="ChEBI" id="CHEBI:597326"/>
    </ligand>
</feature>
<feature type="binding site" evidence="1">
    <location>
        <position position="140"/>
    </location>
    <ligand>
        <name>pyridoxal 5'-phosphate</name>
        <dbReference type="ChEBI" id="CHEBI:597326"/>
    </ligand>
</feature>
<feature type="binding site" evidence="1">
    <location>
        <position position="143"/>
    </location>
    <ligand>
        <name>N(2)-acetyl-L-ornithine</name>
        <dbReference type="ChEBI" id="CHEBI:57805"/>
    </ligand>
</feature>
<feature type="binding site" evidence="1">
    <location>
        <begin position="225"/>
        <end position="228"/>
    </location>
    <ligand>
        <name>pyridoxal 5'-phosphate</name>
        <dbReference type="ChEBI" id="CHEBI:597326"/>
    </ligand>
</feature>
<feature type="binding site" evidence="1">
    <location>
        <position position="282"/>
    </location>
    <ligand>
        <name>N(2)-acetyl-L-ornithine</name>
        <dbReference type="ChEBI" id="CHEBI:57805"/>
    </ligand>
</feature>
<feature type="binding site" evidence="1">
    <location>
        <position position="283"/>
    </location>
    <ligand>
        <name>pyridoxal 5'-phosphate</name>
        <dbReference type="ChEBI" id="CHEBI:597326"/>
    </ligand>
</feature>
<feature type="modified residue" description="N6-(pyridoxal phosphate)lysine" evidence="1">
    <location>
        <position position="254"/>
    </location>
</feature>
<feature type="sequence conflict" description="In Ref. 3; AAS60449." evidence="2" ref="3">
    <original>R</original>
    <variation>C</variation>
    <location>
        <position position="143"/>
    </location>
</feature>
<protein>
    <recommendedName>
        <fullName evidence="1">Acetylornithine/succinyldiaminopimelate aminotransferase</fullName>
        <shortName evidence="1">ACOAT</shortName>
        <shortName evidence="1">DapATase</shortName>
        <shortName evidence="1">Succinyldiaminopimelate transferase</shortName>
        <ecNumber evidence="1">2.6.1.11</ecNumber>
        <ecNumber evidence="1">2.6.1.17</ecNumber>
    </recommendedName>
</protein>
<keyword id="KW-0028">Amino-acid biosynthesis</keyword>
<keyword id="KW-0032">Aminotransferase</keyword>
<keyword id="KW-0055">Arginine biosynthesis</keyword>
<keyword id="KW-0963">Cytoplasm</keyword>
<keyword id="KW-0457">Lysine biosynthesis</keyword>
<keyword id="KW-0663">Pyridoxal phosphate</keyword>
<keyword id="KW-1185">Reference proteome</keyword>
<keyword id="KW-0808">Transferase</keyword>
<dbReference type="EC" id="2.6.1.11" evidence="1"/>
<dbReference type="EC" id="2.6.1.17" evidence="1"/>
<dbReference type="EMBL" id="AL590842">
    <property type="status" value="NOT_ANNOTATED_CDS"/>
    <property type="molecule type" value="Genomic_DNA"/>
</dbReference>
<dbReference type="EMBL" id="AE009952">
    <property type="protein sequence ID" value="AAM87498.1"/>
    <property type="status" value="ALT_INIT"/>
    <property type="molecule type" value="Genomic_DNA"/>
</dbReference>
<dbReference type="EMBL" id="AE017042">
    <property type="protein sequence ID" value="AAS60449.1"/>
    <property type="status" value="ALT_INIT"/>
    <property type="molecule type" value="Genomic_DNA"/>
</dbReference>
<dbReference type="RefSeq" id="WP_002212295.1">
    <property type="nucleotide sequence ID" value="NZ_WUCM01000004.1"/>
</dbReference>
<dbReference type="SMR" id="P59324"/>
<dbReference type="IntAct" id="P59324">
    <property type="interactions" value="1"/>
</dbReference>
<dbReference type="DNASU" id="1148901"/>
<dbReference type="EnsemblBacteria" id="AAS60449">
    <property type="protein sequence ID" value="AAS60449"/>
    <property type="gene ID" value="YP_0172"/>
</dbReference>
<dbReference type="KEGG" id="ypk:y3954"/>
<dbReference type="KEGG" id="ypm:YP_0172"/>
<dbReference type="HOGENOM" id="CLU_016922_10_1_6"/>
<dbReference type="OMA" id="MVPGFKY"/>
<dbReference type="OrthoDB" id="9801052at2"/>
<dbReference type="UniPathway" id="UPA00034">
    <property type="reaction ID" value="UER00020"/>
</dbReference>
<dbReference type="UniPathway" id="UPA00068">
    <property type="reaction ID" value="UER00109"/>
</dbReference>
<dbReference type="Proteomes" id="UP000000815">
    <property type="component" value="Chromosome"/>
</dbReference>
<dbReference type="Proteomes" id="UP000001019">
    <property type="component" value="Chromosome"/>
</dbReference>
<dbReference type="Proteomes" id="UP000002490">
    <property type="component" value="Chromosome"/>
</dbReference>
<dbReference type="GO" id="GO:0005737">
    <property type="term" value="C:cytoplasm"/>
    <property type="evidence" value="ECO:0007669"/>
    <property type="project" value="UniProtKB-SubCell"/>
</dbReference>
<dbReference type="GO" id="GO:0042802">
    <property type="term" value="F:identical protein binding"/>
    <property type="evidence" value="ECO:0000318"/>
    <property type="project" value="GO_Central"/>
</dbReference>
<dbReference type="GO" id="GO:0003992">
    <property type="term" value="F:N2-acetyl-L-ornithine:2-oxoglutarate 5-aminotransferase activity"/>
    <property type="evidence" value="ECO:0007669"/>
    <property type="project" value="UniProtKB-UniRule"/>
</dbReference>
<dbReference type="GO" id="GO:0030170">
    <property type="term" value="F:pyridoxal phosphate binding"/>
    <property type="evidence" value="ECO:0000318"/>
    <property type="project" value="GO_Central"/>
</dbReference>
<dbReference type="GO" id="GO:0009016">
    <property type="term" value="F:succinyldiaminopimelate transaminase activity"/>
    <property type="evidence" value="ECO:0007669"/>
    <property type="project" value="UniProtKB-UniRule"/>
</dbReference>
<dbReference type="GO" id="GO:0006526">
    <property type="term" value="P:L-arginine biosynthetic process"/>
    <property type="evidence" value="ECO:0007669"/>
    <property type="project" value="UniProtKB-UniRule"/>
</dbReference>
<dbReference type="GO" id="GO:0009089">
    <property type="term" value="P:lysine biosynthetic process via diaminopimelate"/>
    <property type="evidence" value="ECO:0007669"/>
    <property type="project" value="UniProtKB-UniRule"/>
</dbReference>
<dbReference type="CDD" id="cd00610">
    <property type="entry name" value="OAT_like"/>
    <property type="match status" value="1"/>
</dbReference>
<dbReference type="FunFam" id="3.40.640.10:FF:000004">
    <property type="entry name" value="Acetylornithine aminotransferase"/>
    <property type="match status" value="1"/>
</dbReference>
<dbReference type="Gene3D" id="3.90.1150.10">
    <property type="entry name" value="Aspartate Aminotransferase, domain 1"/>
    <property type="match status" value="1"/>
</dbReference>
<dbReference type="Gene3D" id="3.40.640.10">
    <property type="entry name" value="Type I PLP-dependent aspartate aminotransferase-like (Major domain)"/>
    <property type="match status" value="1"/>
</dbReference>
<dbReference type="HAMAP" id="MF_01107">
    <property type="entry name" value="ArgD_aminotrans_3"/>
    <property type="match status" value="1"/>
</dbReference>
<dbReference type="InterPro" id="IPR017652">
    <property type="entry name" value="Ac/SucOrn_transaminase_bac"/>
</dbReference>
<dbReference type="InterPro" id="IPR004636">
    <property type="entry name" value="AcOrn/SuccOrn_fam"/>
</dbReference>
<dbReference type="InterPro" id="IPR005814">
    <property type="entry name" value="Aminotrans_3"/>
</dbReference>
<dbReference type="InterPro" id="IPR049704">
    <property type="entry name" value="Aminotrans_3_PPA_site"/>
</dbReference>
<dbReference type="InterPro" id="IPR050103">
    <property type="entry name" value="Class-III_PLP-dep_AT"/>
</dbReference>
<dbReference type="InterPro" id="IPR015424">
    <property type="entry name" value="PyrdxlP-dep_Trfase"/>
</dbReference>
<dbReference type="InterPro" id="IPR015421">
    <property type="entry name" value="PyrdxlP-dep_Trfase_major"/>
</dbReference>
<dbReference type="InterPro" id="IPR015422">
    <property type="entry name" value="PyrdxlP-dep_Trfase_small"/>
</dbReference>
<dbReference type="NCBIfam" id="TIGR03246">
    <property type="entry name" value="arg_catab_astC"/>
    <property type="match status" value="1"/>
</dbReference>
<dbReference type="NCBIfam" id="TIGR00707">
    <property type="entry name" value="argD"/>
    <property type="match status" value="1"/>
</dbReference>
<dbReference type="NCBIfam" id="NF002325">
    <property type="entry name" value="PRK01278.1"/>
    <property type="match status" value="1"/>
</dbReference>
<dbReference type="NCBIfam" id="NF003468">
    <property type="entry name" value="PRK05093.1"/>
    <property type="match status" value="1"/>
</dbReference>
<dbReference type="NCBIfam" id="NF009047">
    <property type="entry name" value="PRK12381.1"/>
    <property type="match status" value="1"/>
</dbReference>
<dbReference type="PANTHER" id="PTHR11986:SF122">
    <property type="entry name" value="ACETYLORNITHINE_SUCCINYLDIAMINOPIMELATE AMINOTRANSFERASE"/>
    <property type="match status" value="1"/>
</dbReference>
<dbReference type="PANTHER" id="PTHR11986">
    <property type="entry name" value="AMINOTRANSFERASE CLASS III"/>
    <property type="match status" value="1"/>
</dbReference>
<dbReference type="Pfam" id="PF00202">
    <property type="entry name" value="Aminotran_3"/>
    <property type="match status" value="1"/>
</dbReference>
<dbReference type="PIRSF" id="PIRSF000521">
    <property type="entry name" value="Transaminase_4ab_Lys_Orn"/>
    <property type="match status" value="1"/>
</dbReference>
<dbReference type="SUPFAM" id="SSF53383">
    <property type="entry name" value="PLP-dependent transferases"/>
    <property type="match status" value="1"/>
</dbReference>
<dbReference type="PROSITE" id="PS00600">
    <property type="entry name" value="AA_TRANSFER_CLASS_3"/>
    <property type="match status" value="1"/>
</dbReference>
<reference key="1">
    <citation type="journal article" date="2001" name="Nature">
        <title>Genome sequence of Yersinia pestis, the causative agent of plague.</title>
        <authorList>
            <person name="Parkhill J."/>
            <person name="Wren B.W."/>
            <person name="Thomson N.R."/>
            <person name="Titball R.W."/>
            <person name="Holden M.T.G."/>
            <person name="Prentice M.B."/>
            <person name="Sebaihia M."/>
            <person name="James K.D."/>
            <person name="Churcher C.M."/>
            <person name="Mungall K.L."/>
            <person name="Baker S."/>
            <person name="Basham D."/>
            <person name="Bentley S.D."/>
            <person name="Brooks K."/>
            <person name="Cerdeno-Tarraga A.-M."/>
            <person name="Chillingworth T."/>
            <person name="Cronin A."/>
            <person name="Davies R.M."/>
            <person name="Davis P."/>
            <person name="Dougan G."/>
            <person name="Feltwell T."/>
            <person name="Hamlin N."/>
            <person name="Holroyd S."/>
            <person name="Jagels K."/>
            <person name="Karlyshev A.V."/>
            <person name="Leather S."/>
            <person name="Moule S."/>
            <person name="Oyston P.C.F."/>
            <person name="Quail M.A."/>
            <person name="Rutherford K.M."/>
            <person name="Simmonds M."/>
            <person name="Skelton J."/>
            <person name="Stevens K."/>
            <person name="Whitehead S."/>
            <person name="Barrell B.G."/>
        </authorList>
    </citation>
    <scope>NUCLEOTIDE SEQUENCE [LARGE SCALE GENOMIC DNA]</scope>
    <source>
        <strain>CO-92 / Biovar Orientalis</strain>
    </source>
</reference>
<reference key="2">
    <citation type="journal article" date="2002" name="J. Bacteriol.">
        <title>Genome sequence of Yersinia pestis KIM.</title>
        <authorList>
            <person name="Deng W."/>
            <person name="Burland V."/>
            <person name="Plunkett G. III"/>
            <person name="Boutin A."/>
            <person name="Mayhew G.F."/>
            <person name="Liss P."/>
            <person name="Perna N.T."/>
            <person name="Rose D.J."/>
            <person name="Mau B."/>
            <person name="Zhou S."/>
            <person name="Schwartz D.C."/>
            <person name="Fetherston J.D."/>
            <person name="Lindler L.E."/>
            <person name="Brubaker R.R."/>
            <person name="Plano G.V."/>
            <person name="Straley S.C."/>
            <person name="McDonough K.A."/>
            <person name="Nilles M.L."/>
            <person name="Matson J.S."/>
            <person name="Blattner F.R."/>
            <person name="Perry R.D."/>
        </authorList>
    </citation>
    <scope>NUCLEOTIDE SEQUENCE [LARGE SCALE GENOMIC DNA]</scope>
    <source>
        <strain>KIM10+ / Biovar Mediaevalis</strain>
    </source>
</reference>
<reference key="3">
    <citation type="journal article" date="2004" name="DNA Res.">
        <title>Complete genome sequence of Yersinia pestis strain 91001, an isolate avirulent to humans.</title>
        <authorList>
            <person name="Song Y."/>
            <person name="Tong Z."/>
            <person name="Wang J."/>
            <person name="Wang L."/>
            <person name="Guo Z."/>
            <person name="Han Y."/>
            <person name="Zhang J."/>
            <person name="Pei D."/>
            <person name="Zhou D."/>
            <person name="Qin H."/>
            <person name="Pang X."/>
            <person name="Han Y."/>
            <person name="Zhai J."/>
            <person name="Li M."/>
            <person name="Cui B."/>
            <person name="Qi Z."/>
            <person name="Jin L."/>
            <person name="Dai R."/>
            <person name="Chen F."/>
            <person name="Li S."/>
            <person name="Ye C."/>
            <person name="Du Z."/>
            <person name="Lin W."/>
            <person name="Wang J."/>
            <person name="Yu J."/>
            <person name="Yang H."/>
            <person name="Wang J."/>
            <person name="Huang P."/>
            <person name="Yang R."/>
        </authorList>
    </citation>
    <scope>NUCLEOTIDE SEQUENCE [LARGE SCALE GENOMIC DNA]</scope>
    <source>
        <strain>91001 / Biovar Mediaevalis</strain>
    </source>
</reference>
<name>ARGD_YERPE</name>
<accession>P59324</accession>
<gene>
    <name evidence="1" type="primary">argD</name>
    <name evidence="1" type="synonym">dapC</name>
    <name type="ordered locus">YPO0170</name>
    <name type="ordered locus">y3954</name>
    <name type="ordered locus">YP_0172</name>
</gene>
<sequence>MTDKLAVNRNTFDQVILPVYAPAQFIPVKGKGSRVWDQQGTEYIDFAGGIAVTALGHCHPALVSALHQQGETLWHTSNVFTNEPALRLAQKLIAATFADRVFFANSGAEANEAAFKLARHYAIERHSPYKTKIIAFHNAFHGRTLFTVSVGGQPKYSDGFGPKPADIIHVPFNDLAAVKAVMDDHTCAVVLEPIQGEGGITSATPEFLQGVRALCDQHNALLVFDEVQSGMGRSGKLFSYMHYGVTPDILTTAKALGGGFPISAMLTTEEIASVMTVGTHGTTYGGNPLACAVAEAALDVINTPEVLNGIEQRHGLFVQALQSINSKYDVFSDIRGMGLLIGAELTAKYRGQAREFLAAAAANGLMILNAGPDVLRLAPSLVIELEDIQQGMARLEKAMASVIKG</sequence>
<organism>
    <name type="scientific">Yersinia pestis</name>
    <dbReference type="NCBI Taxonomy" id="632"/>
    <lineage>
        <taxon>Bacteria</taxon>
        <taxon>Pseudomonadati</taxon>
        <taxon>Pseudomonadota</taxon>
        <taxon>Gammaproteobacteria</taxon>
        <taxon>Enterobacterales</taxon>
        <taxon>Yersiniaceae</taxon>
        <taxon>Yersinia</taxon>
    </lineage>
</organism>